<keyword id="KW-0963">Cytoplasm</keyword>
<keyword id="KW-0488">Methylation</keyword>
<keyword id="KW-0648">Protein biosynthesis</keyword>
<keyword id="KW-1185">Reference proteome</keyword>
<reference key="1">
    <citation type="journal article" date="2011" name="MBio">
        <title>Novel metabolic attributes of the genus Cyanothece, comprising a group of unicellular nitrogen-fixing Cyanobacteria.</title>
        <authorList>
            <person name="Bandyopadhyay A."/>
            <person name="Elvitigala T."/>
            <person name="Welsh E."/>
            <person name="Stockel J."/>
            <person name="Liberton M."/>
            <person name="Min H."/>
            <person name="Sherman L.A."/>
            <person name="Pakrasi H.B."/>
        </authorList>
    </citation>
    <scope>NUCLEOTIDE SEQUENCE [LARGE SCALE GENOMIC DNA]</scope>
    <source>
        <strain>PCC 8801 / RF-1</strain>
    </source>
</reference>
<gene>
    <name evidence="1" type="primary">prfA</name>
    <name type="ordered locus">PCC8801_0208</name>
</gene>
<dbReference type="EMBL" id="CP001287">
    <property type="protein sequence ID" value="ACK64312.1"/>
    <property type="molecule type" value="Genomic_DNA"/>
</dbReference>
<dbReference type="RefSeq" id="WP_012593589.1">
    <property type="nucleotide sequence ID" value="NC_011726.1"/>
</dbReference>
<dbReference type="SMR" id="B7K205"/>
<dbReference type="STRING" id="41431.PCC8801_0208"/>
<dbReference type="KEGG" id="cyp:PCC8801_0208"/>
<dbReference type="eggNOG" id="COG0216">
    <property type="taxonomic scope" value="Bacteria"/>
</dbReference>
<dbReference type="HOGENOM" id="CLU_036856_0_1_3"/>
<dbReference type="OrthoDB" id="9806673at2"/>
<dbReference type="Proteomes" id="UP000008204">
    <property type="component" value="Chromosome"/>
</dbReference>
<dbReference type="GO" id="GO:0005737">
    <property type="term" value="C:cytoplasm"/>
    <property type="evidence" value="ECO:0007669"/>
    <property type="project" value="UniProtKB-SubCell"/>
</dbReference>
<dbReference type="GO" id="GO:0016149">
    <property type="term" value="F:translation release factor activity, codon specific"/>
    <property type="evidence" value="ECO:0007669"/>
    <property type="project" value="UniProtKB-UniRule"/>
</dbReference>
<dbReference type="FunFam" id="3.30.160.20:FF:000004">
    <property type="entry name" value="Peptide chain release factor 1"/>
    <property type="match status" value="1"/>
</dbReference>
<dbReference type="FunFam" id="3.30.70.1660:FF:000002">
    <property type="entry name" value="Peptide chain release factor 1"/>
    <property type="match status" value="1"/>
</dbReference>
<dbReference type="FunFam" id="3.30.70.1660:FF:000014">
    <property type="entry name" value="Peptide chain release factor 1"/>
    <property type="match status" value="1"/>
</dbReference>
<dbReference type="Gene3D" id="3.30.160.20">
    <property type="match status" value="1"/>
</dbReference>
<dbReference type="Gene3D" id="3.30.70.1660">
    <property type="match status" value="1"/>
</dbReference>
<dbReference type="Gene3D" id="6.10.140.1950">
    <property type="match status" value="1"/>
</dbReference>
<dbReference type="HAMAP" id="MF_00093">
    <property type="entry name" value="Rel_fac_1"/>
    <property type="match status" value="1"/>
</dbReference>
<dbReference type="InterPro" id="IPR005139">
    <property type="entry name" value="PCRF"/>
</dbReference>
<dbReference type="InterPro" id="IPR000352">
    <property type="entry name" value="Pep_chain_release_fac_I"/>
</dbReference>
<dbReference type="InterPro" id="IPR045853">
    <property type="entry name" value="Pep_chain_release_fac_I_sf"/>
</dbReference>
<dbReference type="InterPro" id="IPR050057">
    <property type="entry name" value="Prokaryotic/Mito_RF"/>
</dbReference>
<dbReference type="InterPro" id="IPR004373">
    <property type="entry name" value="RF-1"/>
</dbReference>
<dbReference type="NCBIfam" id="TIGR00019">
    <property type="entry name" value="prfA"/>
    <property type="match status" value="1"/>
</dbReference>
<dbReference type="NCBIfam" id="NF001859">
    <property type="entry name" value="PRK00591.1"/>
    <property type="match status" value="1"/>
</dbReference>
<dbReference type="PANTHER" id="PTHR43804">
    <property type="entry name" value="LD18447P"/>
    <property type="match status" value="1"/>
</dbReference>
<dbReference type="PANTHER" id="PTHR43804:SF8">
    <property type="entry name" value="PEPTIDE CHAIN RELEASE FACTOR APG3, CHLOROPLASTIC"/>
    <property type="match status" value="1"/>
</dbReference>
<dbReference type="Pfam" id="PF03462">
    <property type="entry name" value="PCRF"/>
    <property type="match status" value="1"/>
</dbReference>
<dbReference type="Pfam" id="PF00472">
    <property type="entry name" value="RF-1"/>
    <property type="match status" value="1"/>
</dbReference>
<dbReference type="SMART" id="SM00937">
    <property type="entry name" value="PCRF"/>
    <property type="match status" value="1"/>
</dbReference>
<dbReference type="SUPFAM" id="SSF75620">
    <property type="entry name" value="Release factor"/>
    <property type="match status" value="1"/>
</dbReference>
<dbReference type="PROSITE" id="PS00745">
    <property type="entry name" value="RF_PROK_I"/>
    <property type="match status" value="1"/>
</dbReference>
<comment type="function">
    <text evidence="1">Peptide chain release factor 1 directs the termination of translation in response to the peptide chain termination codons UAG and UAA.</text>
</comment>
<comment type="subcellular location">
    <subcellularLocation>
        <location evidence="1">Cytoplasm</location>
    </subcellularLocation>
</comment>
<comment type="PTM">
    <text evidence="1">Methylated by PrmC. Methylation increases the termination efficiency of RF1.</text>
</comment>
<comment type="similarity">
    <text evidence="1">Belongs to the prokaryotic/mitochondrial release factor family.</text>
</comment>
<accession>B7K205</accession>
<sequence>MAESYLLEKLQSVDQTYQELTHRLADPDIATNPDELQRVARLRSSLEETVLTYDSWKQTQEELIGAKQILKDAGGDPEMREMAALEVEELAEKLEELEKKLKILLLPRDPNDDKNIMLEIRAGTGGDEASIWAGDLVRMYSRYAESQKWTVKLVSESLADMGGFKEAILEIQGDRVYSKLKFEAGVHRVQRVPVTEAGGRVHTSTATVAIMPEVDDVEVQIDAKDIEITTARSGGAGGQNVNKVETAVDLFYKPLGIRIFCTEERSQLQNRERAMQILRAKLYDLKLREQQDAVSSMRKSQVGTGARSEKIRTYNYKDNRVTDHRLGQNFSLAGTLEGDIEEIIQSCISQDQQERLEELAASPETASAIN</sequence>
<evidence type="ECO:0000255" key="1">
    <source>
        <dbReference type="HAMAP-Rule" id="MF_00093"/>
    </source>
</evidence>
<organism>
    <name type="scientific">Rippkaea orientalis (strain PCC 8801 / RF-1)</name>
    <name type="common">Cyanothece sp. (strain PCC 8801)</name>
    <dbReference type="NCBI Taxonomy" id="41431"/>
    <lineage>
        <taxon>Bacteria</taxon>
        <taxon>Bacillati</taxon>
        <taxon>Cyanobacteriota</taxon>
        <taxon>Cyanophyceae</taxon>
        <taxon>Oscillatoriophycideae</taxon>
        <taxon>Chroococcales</taxon>
        <taxon>Aphanothecaceae</taxon>
        <taxon>Rippkaea</taxon>
        <taxon>Rippkaea orientalis</taxon>
    </lineage>
</organism>
<feature type="chain" id="PRO_1000117233" description="Peptide chain release factor 1">
    <location>
        <begin position="1"/>
        <end position="370"/>
    </location>
</feature>
<feature type="modified residue" description="N5-methylglutamine" evidence="1">
    <location>
        <position position="239"/>
    </location>
</feature>
<proteinExistence type="inferred from homology"/>
<protein>
    <recommendedName>
        <fullName evidence="1">Peptide chain release factor 1</fullName>
        <shortName evidence="1">RF-1</shortName>
    </recommendedName>
</protein>
<name>RF1_RIPO1</name>